<keyword id="KW-0012">Acyltransferase</keyword>
<keyword id="KW-0963">Cytoplasm</keyword>
<keyword id="KW-1185">Reference proteome</keyword>
<keyword id="KW-0808">Transferase</keyword>
<evidence type="ECO:0000255" key="1">
    <source>
        <dbReference type="HAMAP-Rule" id="MF_00013"/>
    </source>
</evidence>
<evidence type="ECO:0000255" key="2">
    <source>
        <dbReference type="PROSITE-ProRule" id="PRU01067"/>
    </source>
</evidence>
<proteinExistence type="inferred from homology"/>
<accession>A0L510</accession>
<protein>
    <recommendedName>
        <fullName evidence="1">Octanoyltransferase</fullName>
        <ecNumber evidence="1">2.3.1.181</ecNumber>
    </recommendedName>
    <alternativeName>
        <fullName evidence="1">Lipoate-protein ligase B</fullName>
    </alternativeName>
    <alternativeName>
        <fullName evidence="1">Lipoyl/octanoyl transferase</fullName>
    </alternativeName>
    <alternativeName>
        <fullName evidence="1">Octanoyl-[acyl-carrier-protein]-protein N-octanoyltransferase</fullName>
    </alternativeName>
</protein>
<sequence length="212" mass="23592">MHEPRAVVVVHRDVWAYQQAWEQQLAWVQAIHEGQRQDTLILLEHMPVYTLGKRATRADVLRQDIPAVYTDRGGQVTYHGPGQLVVYVLWNLRGQLHGVRAHVARLEEMVMEVLAHYGVVGQRDGAGPGIWVGDAKIASIGVRVTQGVTLHGLSLNRDPDLSHFQGIIPCGQVGRPVTSLAALGVAVSRQALEQRMVEAFERQFNARCWEAS</sequence>
<reference key="1">
    <citation type="journal article" date="2009" name="Appl. Environ. Microbiol.">
        <title>Complete genome sequence of the chemolithoautotrophic marine magnetotactic coccus strain MC-1.</title>
        <authorList>
            <person name="Schubbe S."/>
            <person name="Williams T.J."/>
            <person name="Xie G."/>
            <person name="Kiss H.E."/>
            <person name="Brettin T.S."/>
            <person name="Martinez D."/>
            <person name="Ross C.A."/>
            <person name="Schuler D."/>
            <person name="Cox B.L."/>
            <person name="Nealson K.H."/>
            <person name="Bazylinski D.A."/>
        </authorList>
    </citation>
    <scope>NUCLEOTIDE SEQUENCE [LARGE SCALE GENOMIC DNA]</scope>
    <source>
        <strain>ATCC BAA-1437 / JCM 17883 / MC-1</strain>
    </source>
</reference>
<feature type="chain" id="PRO_0000321642" description="Octanoyltransferase">
    <location>
        <begin position="1"/>
        <end position="212"/>
    </location>
</feature>
<feature type="domain" description="BPL/LPL catalytic" evidence="2">
    <location>
        <begin position="34"/>
        <end position="208"/>
    </location>
</feature>
<feature type="active site" description="Acyl-thioester intermediate" evidence="1">
    <location>
        <position position="170"/>
    </location>
</feature>
<feature type="binding site" evidence="1">
    <location>
        <begin position="72"/>
        <end position="79"/>
    </location>
    <ligand>
        <name>substrate</name>
    </ligand>
</feature>
<feature type="binding site" evidence="1">
    <location>
        <begin position="139"/>
        <end position="141"/>
    </location>
    <ligand>
        <name>substrate</name>
    </ligand>
</feature>
<feature type="binding site" evidence="1">
    <location>
        <begin position="152"/>
        <end position="154"/>
    </location>
    <ligand>
        <name>substrate</name>
    </ligand>
</feature>
<feature type="site" description="Lowers pKa of active site Cys" evidence="1">
    <location>
        <position position="136"/>
    </location>
</feature>
<gene>
    <name evidence="1" type="primary">lipB</name>
    <name type="ordered locus">Mmc1_0528</name>
</gene>
<dbReference type="EC" id="2.3.1.181" evidence="1"/>
<dbReference type="EMBL" id="CP000471">
    <property type="protein sequence ID" value="ABK43053.1"/>
    <property type="molecule type" value="Genomic_DNA"/>
</dbReference>
<dbReference type="RefSeq" id="WP_011712220.1">
    <property type="nucleotide sequence ID" value="NC_008576.1"/>
</dbReference>
<dbReference type="SMR" id="A0L510"/>
<dbReference type="STRING" id="156889.Mmc1_0528"/>
<dbReference type="KEGG" id="mgm:Mmc1_0528"/>
<dbReference type="eggNOG" id="COG0321">
    <property type="taxonomic scope" value="Bacteria"/>
</dbReference>
<dbReference type="HOGENOM" id="CLU_035168_1_3_5"/>
<dbReference type="OrthoDB" id="9787061at2"/>
<dbReference type="UniPathway" id="UPA00538">
    <property type="reaction ID" value="UER00592"/>
</dbReference>
<dbReference type="Proteomes" id="UP000002586">
    <property type="component" value="Chromosome"/>
</dbReference>
<dbReference type="GO" id="GO:0005737">
    <property type="term" value="C:cytoplasm"/>
    <property type="evidence" value="ECO:0007669"/>
    <property type="project" value="UniProtKB-SubCell"/>
</dbReference>
<dbReference type="GO" id="GO:0033819">
    <property type="term" value="F:lipoyl(octanoyl) transferase activity"/>
    <property type="evidence" value="ECO:0007669"/>
    <property type="project" value="UniProtKB-EC"/>
</dbReference>
<dbReference type="GO" id="GO:0036211">
    <property type="term" value="P:protein modification process"/>
    <property type="evidence" value="ECO:0007669"/>
    <property type="project" value="InterPro"/>
</dbReference>
<dbReference type="CDD" id="cd16444">
    <property type="entry name" value="LipB"/>
    <property type="match status" value="1"/>
</dbReference>
<dbReference type="Gene3D" id="3.30.930.10">
    <property type="entry name" value="Bira Bifunctional Protein, Domain 2"/>
    <property type="match status" value="1"/>
</dbReference>
<dbReference type="HAMAP" id="MF_00013">
    <property type="entry name" value="LipB"/>
    <property type="match status" value="1"/>
</dbReference>
<dbReference type="InterPro" id="IPR045864">
    <property type="entry name" value="aa-tRNA-synth_II/BPL/LPL"/>
</dbReference>
<dbReference type="InterPro" id="IPR004143">
    <property type="entry name" value="BPL_LPL_catalytic"/>
</dbReference>
<dbReference type="InterPro" id="IPR000544">
    <property type="entry name" value="Octanoyltransferase"/>
</dbReference>
<dbReference type="InterPro" id="IPR020605">
    <property type="entry name" value="Octanoyltransferase_CS"/>
</dbReference>
<dbReference type="NCBIfam" id="TIGR00214">
    <property type="entry name" value="lipB"/>
    <property type="match status" value="1"/>
</dbReference>
<dbReference type="NCBIfam" id="NF010925">
    <property type="entry name" value="PRK14345.1"/>
    <property type="match status" value="1"/>
</dbReference>
<dbReference type="PANTHER" id="PTHR10993:SF7">
    <property type="entry name" value="LIPOYLTRANSFERASE 2, MITOCHONDRIAL-RELATED"/>
    <property type="match status" value="1"/>
</dbReference>
<dbReference type="PANTHER" id="PTHR10993">
    <property type="entry name" value="OCTANOYLTRANSFERASE"/>
    <property type="match status" value="1"/>
</dbReference>
<dbReference type="Pfam" id="PF21948">
    <property type="entry name" value="LplA-B_cat"/>
    <property type="match status" value="1"/>
</dbReference>
<dbReference type="PIRSF" id="PIRSF016262">
    <property type="entry name" value="LPLase"/>
    <property type="match status" value="1"/>
</dbReference>
<dbReference type="SUPFAM" id="SSF55681">
    <property type="entry name" value="Class II aaRS and biotin synthetases"/>
    <property type="match status" value="1"/>
</dbReference>
<dbReference type="PROSITE" id="PS51733">
    <property type="entry name" value="BPL_LPL_CATALYTIC"/>
    <property type="match status" value="1"/>
</dbReference>
<dbReference type="PROSITE" id="PS01313">
    <property type="entry name" value="LIPB"/>
    <property type="match status" value="1"/>
</dbReference>
<name>LIPB_MAGMM</name>
<organism>
    <name type="scientific">Magnetococcus marinus (strain ATCC BAA-1437 / JCM 17883 / MC-1)</name>
    <dbReference type="NCBI Taxonomy" id="156889"/>
    <lineage>
        <taxon>Bacteria</taxon>
        <taxon>Pseudomonadati</taxon>
        <taxon>Pseudomonadota</taxon>
        <taxon>Alphaproteobacteria</taxon>
        <taxon>Magnetococcales</taxon>
        <taxon>Magnetococcaceae</taxon>
        <taxon>Magnetococcus</taxon>
    </lineage>
</organism>
<comment type="function">
    <text evidence="1">Catalyzes the transfer of endogenously produced octanoic acid from octanoyl-acyl-carrier-protein onto the lipoyl domains of lipoate-dependent enzymes. Lipoyl-ACP can also act as a substrate although octanoyl-ACP is likely to be the physiological substrate.</text>
</comment>
<comment type="catalytic activity">
    <reaction evidence="1">
        <text>octanoyl-[ACP] + L-lysyl-[protein] = N(6)-octanoyl-L-lysyl-[protein] + holo-[ACP] + H(+)</text>
        <dbReference type="Rhea" id="RHEA:17665"/>
        <dbReference type="Rhea" id="RHEA-COMP:9636"/>
        <dbReference type="Rhea" id="RHEA-COMP:9685"/>
        <dbReference type="Rhea" id="RHEA-COMP:9752"/>
        <dbReference type="Rhea" id="RHEA-COMP:9928"/>
        <dbReference type="ChEBI" id="CHEBI:15378"/>
        <dbReference type="ChEBI" id="CHEBI:29969"/>
        <dbReference type="ChEBI" id="CHEBI:64479"/>
        <dbReference type="ChEBI" id="CHEBI:78463"/>
        <dbReference type="ChEBI" id="CHEBI:78809"/>
        <dbReference type="EC" id="2.3.1.181"/>
    </reaction>
</comment>
<comment type="pathway">
    <text evidence="1">Protein modification; protein lipoylation via endogenous pathway; protein N(6)-(lipoyl)lysine from octanoyl-[acyl-carrier-protein]: step 1/2.</text>
</comment>
<comment type="subcellular location">
    <subcellularLocation>
        <location evidence="1">Cytoplasm</location>
    </subcellularLocation>
</comment>
<comment type="miscellaneous">
    <text evidence="1">In the reaction, the free carboxyl group of octanoic acid is attached via an amide linkage to the epsilon-amino group of a specific lysine residue of lipoyl domains of lipoate-dependent enzymes.</text>
</comment>
<comment type="similarity">
    <text evidence="1">Belongs to the LipB family.</text>
</comment>